<dbReference type="EMBL" id="AE015928">
    <property type="protein sequence ID" value="AAO78334.1"/>
    <property type="status" value="ALT_INIT"/>
    <property type="molecule type" value="Genomic_DNA"/>
</dbReference>
<dbReference type="RefSeq" id="NP_812140.1">
    <property type="nucleotide sequence ID" value="NC_004663.1"/>
</dbReference>
<dbReference type="FunCoup" id="Q8A2S7">
    <property type="interactions" value="259"/>
</dbReference>
<dbReference type="STRING" id="226186.BT_3228"/>
<dbReference type="PaxDb" id="226186-BT_3228"/>
<dbReference type="DNASU" id="1075866"/>
<dbReference type="EnsemblBacteria" id="AAO78334">
    <property type="protein sequence ID" value="AAO78334"/>
    <property type="gene ID" value="BT_3228"/>
</dbReference>
<dbReference type="KEGG" id="bth:BT_3228"/>
<dbReference type="PATRIC" id="fig|226186.12.peg.3289"/>
<dbReference type="eggNOG" id="COG0759">
    <property type="taxonomic scope" value="Bacteria"/>
</dbReference>
<dbReference type="HOGENOM" id="CLU_144811_6_1_10"/>
<dbReference type="InParanoid" id="Q8A2S7"/>
<dbReference type="OrthoDB" id="9801753at2"/>
<dbReference type="Proteomes" id="UP000001414">
    <property type="component" value="Chromosome"/>
</dbReference>
<dbReference type="GO" id="GO:0005886">
    <property type="term" value="C:plasma membrane"/>
    <property type="evidence" value="ECO:0007669"/>
    <property type="project" value="UniProtKB-SubCell"/>
</dbReference>
<dbReference type="HAMAP" id="MF_00386">
    <property type="entry name" value="UPF0161_YidD"/>
    <property type="match status" value="1"/>
</dbReference>
<dbReference type="InterPro" id="IPR002696">
    <property type="entry name" value="Membr_insert_effic_factor_YidD"/>
</dbReference>
<dbReference type="NCBIfam" id="TIGR00278">
    <property type="entry name" value="membrane protein insertion efficiency factor YidD"/>
    <property type="match status" value="1"/>
</dbReference>
<dbReference type="PANTHER" id="PTHR33383">
    <property type="entry name" value="MEMBRANE PROTEIN INSERTION EFFICIENCY FACTOR-RELATED"/>
    <property type="match status" value="1"/>
</dbReference>
<dbReference type="PANTHER" id="PTHR33383:SF1">
    <property type="entry name" value="MEMBRANE PROTEIN INSERTION EFFICIENCY FACTOR-RELATED"/>
    <property type="match status" value="1"/>
</dbReference>
<dbReference type="Pfam" id="PF01809">
    <property type="entry name" value="YidD"/>
    <property type="match status" value="1"/>
</dbReference>
<dbReference type="SMART" id="SM01234">
    <property type="entry name" value="Haemolytic"/>
    <property type="match status" value="1"/>
</dbReference>
<sequence length="79" mass="8884">MSLKSLVRKVFSFLLLIPIYFYRVCISPLTPPSCRFTPTCSAYAVEAIKKHGPVKGLYLAVRRILRCHPWGGSGYDPVP</sequence>
<gene>
    <name type="ordered locus">BT_3228</name>
</gene>
<proteinExistence type="inferred from homology"/>
<protein>
    <recommendedName>
        <fullName evidence="1">Putative membrane protein insertion efficiency factor</fullName>
    </recommendedName>
</protein>
<accession>Q8A2S7</accession>
<keyword id="KW-0997">Cell inner membrane</keyword>
<keyword id="KW-1003">Cell membrane</keyword>
<keyword id="KW-0472">Membrane</keyword>
<keyword id="KW-1185">Reference proteome</keyword>
<organism>
    <name type="scientific">Bacteroides thetaiotaomicron (strain ATCC 29148 / DSM 2079 / JCM 5827 / CCUG 10774 / NCTC 10582 / VPI-5482 / E50)</name>
    <dbReference type="NCBI Taxonomy" id="226186"/>
    <lineage>
        <taxon>Bacteria</taxon>
        <taxon>Pseudomonadati</taxon>
        <taxon>Bacteroidota</taxon>
        <taxon>Bacteroidia</taxon>
        <taxon>Bacteroidales</taxon>
        <taxon>Bacteroidaceae</taxon>
        <taxon>Bacteroides</taxon>
    </lineage>
</organism>
<name>YIDD_BACTN</name>
<feature type="chain" id="PRO_0000171794" description="Putative membrane protein insertion efficiency factor">
    <location>
        <begin position="1"/>
        <end position="79"/>
    </location>
</feature>
<reference key="1">
    <citation type="journal article" date="2003" name="Science">
        <title>A genomic view of the human-Bacteroides thetaiotaomicron symbiosis.</title>
        <authorList>
            <person name="Xu J."/>
            <person name="Bjursell M.K."/>
            <person name="Himrod J."/>
            <person name="Deng S."/>
            <person name="Carmichael L.K."/>
            <person name="Chiang H.C."/>
            <person name="Hooper L.V."/>
            <person name="Gordon J.I."/>
        </authorList>
    </citation>
    <scope>NUCLEOTIDE SEQUENCE [LARGE SCALE GENOMIC DNA]</scope>
    <source>
        <strain>ATCC 29148 / DSM 2079 / JCM 5827 / CCUG 10774 / NCTC 10582 / VPI-5482 / E50</strain>
    </source>
</reference>
<evidence type="ECO:0000255" key="1">
    <source>
        <dbReference type="HAMAP-Rule" id="MF_00386"/>
    </source>
</evidence>
<evidence type="ECO:0000305" key="2"/>
<comment type="function">
    <text evidence="1">Could be involved in insertion of integral membrane proteins into the membrane.</text>
</comment>
<comment type="subcellular location">
    <subcellularLocation>
        <location evidence="1">Cell inner membrane</location>
        <topology evidence="1">Peripheral membrane protein</topology>
        <orientation evidence="1">Cytoplasmic side</orientation>
    </subcellularLocation>
</comment>
<comment type="similarity">
    <text evidence="1">Belongs to the UPF0161 family.</text>
</comment>
<comment type="sequence caution" evidence="2">
    <conflict type="erroneous initiation">
        <sequence resource="EMBL-CDS" id="AAO78334"/>
    </conflict>
</comment>